<gene>
    <name evidence="1" type="primary">tsaD</name>
    <name type="synonym">gcp</name>
    <name type="ordered locus">SG3105</name>
</gene>
<dbReference type="EC" id="2.3.1.234" evidence="1"/>
<dbReference type="EMBL" id="AM933173">
    <property type="protein sequence ID" value="CAR38906.1"/>
    <property type="molecule type" value="Genomic_DNA"/>
</dbReference>
<dbReference type="RefSeq" id="WP_001264394.1">
    <property type="nucleotide sequence ID" value="NC_011274.1"/>
</dbReference>
<dbReference type="SMR" id="B5REG6"/>
<dbReference type="KEGG" id="seg:SG3105"/>
<dbReference type="HOGENOM" id="CLU_023208_0_0_6"/>
<dbReference type="Proteomes" id="UP000008321">
    <property type="component" value="Chromosome"/>
</dbReference>
<dbReference type="GO" id="GO:0005737">
    <property type="term" value="C:cytoplasm"/>
    <property type="evidence" value="ECO:0007669"/>
    <property type="project" value="UniProtKB-SubCell"/>
</dbReference>
<dbReference type="GO" id="GO:0005506">
    <property type="term" value="F:iron ion binding"/>
    <property type="evidence" value="ECO:0007669"/>
    <property type="project" value="UniProtKB-UniRule"/>
</dbReference>
<dbReference type="GO" id="GO:0061711">
    <property type="term" value="F:N(6)-L-threonylcarbamoyladenine synthase activity"/>
    <property type="evidence" value="ECO:0007669"/>
    <property type="project" value="UniProtKB-EC"/>
</dbReference>
<dbReference type="GO" id="GO:0002949">
    <property type="term" value="P:tRNA threonylcarbamoyladenosine modification"/>
    <property type="evidence" value="ECO:0007669"/>
    <property type="project" value="UniProtKB-UniRule"/>
</dbReference>
<dbReference type="CDD" id="cd24097">
    <property type="entry name" value="ASKHA_NBD_TsaD-like"/>
    <property type="match status" value="1"/>
</dbReference>
<dbReference type="FunFam" id="3.30.420.40:FF:000031">
    <property type="entry name" value="tRNA N6-adenosine threonylcarbamoyltransferase"/>
    <property type="match status" value="1"/>
</dbReference>
<dbReference type="Gene3D" id="3.30.420.40">
    <property type="match status" value="2"/>
</dbReference>
<dbReference type="HAMAP" id="MF_01445">
    <property type="entry name" value="TsaD"/>
    <property type="match status" value="1"/>
</dbReference>
<dbReference type="InterPro" id="IPR043129">
    <property type="entry name" value="ATPase_NBD"/>
</dbReference>
<dbReference type="InterPro" id="IPR000905">
    <property type="entry name" value="Gcp-like_dom"/>
</dbReference>
<dbReference type="InterPro" id="IPR017861">
    <property type="entry name" value="KAE1/TsaD"/>
</dbReference>
<dbReference type="InterPro" id="IPR017860">
    <property type="entry name" value="Peptidase_M22_CS"/>
</dbReference>
<dbReference type="InterPro" id="IPR022450">
    <property type="entry name" value="TsaD"/>
</dbReference>
<dbReference type="NCBIfam" id="TIGR00329">
    <property type="entry name" value="gcp_kae1"/>
    <property type="match status" value="1"/>
</dbReference>
<dbReference type="NCBIfam" id="TIGR03723">
    <property type="entry name" value="T6A_TsaD_YgjD"/>
    <property type="match status" value="1"/>
</dbReference>
<dbReference type="PANTHER" id="PTHR11735">
    <property type="entry name" value="TRNA N6-ADENOSINE THREONYLCARBAMOYLTRANSFERASE"/>
    <property type="match status" value="1"/>
</dbReference>
<dbReference type="PANTHER" id="PTHR11735:SF6">
    <property type="entry name" value="TRNA N6-ADENOSINE THREONYLCARBAMOYLTRANSFERASE, MITOCHONDRIAL"/>
    <property type="match status" value="1"/>
</dbReference>
<dbReference type="Pfam" id="PF00814">
    <property type="entry name" value="TsaD"/>
    <property type="match status" value="1"/>
</dbReference>
<dbReference type="PRINTS" id="PR00789">
    <property type="entry name" value="OSIALOPTASE"/>
</dbReference>
<dbReference type="SUPFAM" id="SSF53067">
    <property type="entry name" value="Actin-like ATPase domain"/>
    <property type="match status" value="1"/>
</dbReference>
<dbReference type="PROSITE" id="PS01016">
    <property type="entry name" value="GLYCOPROTEASE"/>
    <property type="match status" value="1"/>
</dbReference>
<protein>
    <recommendedName>
        <fullName evidence="1">tRNA N6-adenosine threonylcarbamoyltransferase</fullName>
        <ecNumber evidence="1">2.3.1.234</ecNumber>
    </recommendedName>
    <alternativeName>
        <fullName evidence="1">N6-L-threonylcarbamoyladenine synthase</fullName>
        <shortName evidence="1">t(6)A synthase</shortName>
    </alternativeName>
    <alternativeName>
        <fullName evidence="1">t(6)A37 threonylcarbamoyladenosine biosynthesis protein TsaD</fullName>
    </alternativeName>
    <alternativeName>
        <fullName evidence="1">tRNA threonylcarbamoyladenosine biosynthesis protein TsaD</fullName>
    </alternativeName>
</protein>
<keyword id="KW-0012">Acyltransferase</keyword>
<keyword id="KW-0963">Cytoplasm</keyword>
<keyword id="KW-0408">Iron</keyword>
<keyword id="KW-0479">Metal-binding</keyword>
<keyword id="KW-0808">Transferase</keyword>
<keyword id="KW-0819">tRNA processing</keyword>
<sequence>MRVLGIETSCDETGIAIYDDKKGLLANQLYSQVKLHADYGGVVPELASRDHVRKTVPLIQAALKEAGLTASDIDAVAYTAGPGLVGALLVGATVGRSLAFAWNVPAIPVHHMEGHLLAPMLEDNPPEFPFVALLVSGGHTQLISVTGIGQYELLGESIDDAAGEAFDKTAKLLGLDYPGGPMLSKMASQGTAGRFVFPRPMTDRPGLDFSFSGLKTFAANTIRSNGGDEQTRADIARAFEDAVVDTLMIKCKRALESTGFKRLVMAGGVSANRTLRAKLAEMMQKRRGEVFYARPEFCTDNGAMIAYAGMVRFKAGVTADLGVTVRPRWPLAELPAA</sequence>
<organism>
    <name type="scientific">Salmonella gallinarum (strain 287/91 / NCTC 13346)</name>
    <dbReference type="NCBI Taxonomy" id="550538"/>
    <lineage>
        <taxon>Bacteria</taxon>
        <taxon>Pseudomonadati</taxon>
        <taxon>Pseudomonadota</taxon>
        <taxon>Gammaproteobacteria</taxon>
        <taxon>Enterobacterales</taxon>
        <taxon>Enterobacteriaceae</taxon>
        <taxon>Salmonella</taxon>
    </lineage>
</organism>
<name>TSAD_SALG2</name>
<feature type="chain" id="PRO_1000146017" description="tRNA N6-adenosine threonylcarbamoyltransferase">
    <location>
        <begin position="1"/>
        <end position="337"/>
    </location>
</feature>
<feature type="binding site" evidence="1">
    <location>
        <position position="111"/>
    </location>
    <ligand>
        <name>Fe cation</name>
        <dbReference type="ChEBI" id="CHEBI:24875"/>
    </ligand>
</feature>
<feature type="binding site" evidence="1">
    <location>
        <position position="115"/>
    </location>
    <ligand>
        <name>Fe cation</name>
        <dbReference type="ChEBI" id="CHEBI:24875"/>
    </ligand>
</feature>
<feature type="binding site" evidence="1">
    <location>
        <begin position="134"/>
        <end position="138"/>
    </location>
    <ligand>
        <name>substrate</name>
    </ligand>
</feature>
<feature type="binding site" evidence="1">
    <location>
        <position position="167"/>
    </location>
    <ligand>
        <name>substrate</name>
    </ligand>
</feature>
<feature type="binding site" evidence="1">
    <location>
        <position position="180"/>
    </location>
    <ligand>
        <name>substrate</name>
    </ligand>
</feature>
<feature type="binding site" evidence="1">
    <location>
        <position position="272"/>
    </location>
    <ligand>
        <name>substrate</name>
    </ligand>
</feature>
<feature type="binding site" evidence="1">
    <location>
        <position position="300"/>
    </location>
    <ligand>
        <name>Fe cation</name>
        <dbReference type="ChEBI" id="CHEBI:24875"/>
    </ligand>
</feature>
<reference key="1">
    <citation type="journal article" date="2008" name="Genome Res.">
        <title>Comparative genome analysis of Salmonella enteritidis PT4 and Salmonella gallinarum 287/91 provides insights into evolutionary and host adaptation pathways.</title>
        <authorList>
            <person name="Thomson N.R."/>
            <person name="Clayton D.J."/>
            <person name="Windhorst D."/>
            <person name="Vernikos G."/>
            <person name="Davidson S."/>
            <person name="Churcher C."/>
            <person name="Quail M.A."/>
            <person name="Stevens M."/>
            <person name="Jones M.A."/>
            <person name="Watson M."/>
            <person name="Barron A."/>
            <person name="Layton A."/>
            <person name="Pickard D."/>
            <person name="Kingsley R.A."/>
            <person name="Bignell A."/>
            <person name="Clark L."/>
            <person name="Harris B."/>
            <person name="Ormond D."/>
            <person name="Abdellah Z."/>
            <person name="Brooks K."/>
            <person name="Cherevach I."/>
            <person name="Chillingworth T."/>
            <person name="Woodward J."/>
            <person name="Norberczak H."/>
            <person name="Lord A."/>
            <person name="Arrowsmith C."/>
            <person name="Jagels K."/>
            <person name="Moule S."/>
            <person name="Mungall K."/>
            <person name="Saunders M."/>
            <person name="Whitehead S."/>
            <person name="Chabalgoity J.A."/>
            <person name="Maskell D."/>
            <person name="Humphreys T."/>
            <person name="Roberts M."/>
            <person name="Barrow P.A."/>
            <person name="Dougan G."/>
            <person name="Parkhill J."/>
        </authorList>
    </citation>
    <scope>NUCLEOTIDE SEQUENCE [LARGE SCALE GENOMIC DNA]</scope>
    <source>
        <strain>287/91 / NCTC 13346</strain>
    </source>
</reference>
<proteinExistence type="inferred from homology"/>
<comment type="function">
    <text evidence="1">Required for the formation of a threonylcarbamoyl group on adenosine at position 37 (t(6)A37) in tRNAs that read codons beginning with adenine. Is involved in the transfer of the threonylcarbamoyl moiety of threonylcarbamoyl-AMP (TC-AMP) to the N6 group of A37, together with TsaE and TsaB. TsaD likely plays a direct catalytic role in this reaction.</text>
</comment>
<comment type="catalytic activity">
    <reaction evidence="1">
        <text>L-threonylcarbamoyladenylate + adenosine(37) in tRNA = N(6)-L-threonylcarbamoyladenosine(37) in tRNA + AMP + H(+)</text>
        <dbReference type="Rhea" id="RHEA:37059"/>
        <dbReference type="Rhea" id="RHEA-COMP:10162"/>
        <dbReference type="Rhea" id="RHEA-COMP:10163"/>
        <dbReference type="ChEBI" id="CHEBI:15378"/>
        <dbReference type="ChEBI" id="CHEBI:73682"/>
        <dbReference type="ChEBI" id="CHEBI:74411"/>
        <dbReference type="ChEBI" id="CHEBI:74418"/>
        <dbReference type="ChEBI" id="CHEBI:456215"/>
        <dbReference type="EC" id="2.3.1.234"/>
    </reaction>
</comment>
<comment type="cofactor">
    <cofactor evidence="1">
        <name>Fe(2+)</name>
        <dbReference type="ChEBI" id="CHEBI:29033"/>
    </cofactor>
    <text evidence="1">Binds 1 Fe(2+) ion per subunit.</text>
</comment>
<comment type="subcellular location">
    <subcellularLocation>
        <location evidence="1">Cytoplasm</location>
    </subcellularLocation>
</comment>
<comment type="similarity">
    <text evidence="1">Belongs to the KAE1 / TsaD family.</text>
</comment>
<evidence type="ECO:0000255" key="1">
    <source>
        <dbReference type="HAMAP-Rule" id="MF_01445"/>
    </source>
</evidence>
<accession>B5REG6</accession>